<proteinExistence type="inferred from homology"/>
<comment type="function">
    <text evidence="1 2">This enzyme is required for electron transfer from NADP to cytochrome P450 in microsomes. It can also provide electron transfer to heme oxygenase and cytochrome B5 (By similarity). Involved in the biosynthesis of the antimalarial endoperoxide artemisinin (By similarity). Acts as a redox partner for CYP71AV1 which catalyzes the conversion of amorphadiene to more oxygenated products (By similarity).</text>
</comment>
<comment type="catalytic activity">
    <reaction evidence="2">
        <text>2 oxidized [cytochrome P450] + NADPH = 2 reduced [cytochrome P450] + NADP(+) + H(+)</text>
        <dbReference type="Rhea" id="RHEA:24040"/>
        <dbReference type="Rhea" id="RHEA-COMP:14627"/>
        <dbReference type="Rhea" id="RHEA-COMP:14628"/>
        <dbReference type="ChEBI" id="CHEBI:15378"/>
        <dbReference type="ChEBI" id="CHEBI:55376"/>
        <dbReference type="ChEBI" id="CHEBI:57783"/>
        <dbReference type="ChEBI" id="CHEBI:58349"/>
        <dbReference type="ChEBI" id="CHEBI:60344"/>
        <dbReference type="EC" id="1.6.2.4"/>
    </reaction>
</comment>
<comment type="cofactor">
    <cofactor evidence="2">
        <name>FAD</name>
        <dbReference type="ChEBI" id="CHEBI:57692"/>
    </cofactor>
    <text evidence="2">Binds 1 FAD per monomer.</text>
</comment>
<comment type="cofactor">
    <cofactor evidence="2">
        <name>FMN</name>
        <dbReference type="ChEBI" id="CHEBI:58210"/>
    </cofactor>
    <text evidence="2">Binds 1 FMN per monomer.</text>
</comment>
<comment type="subcellular location">
    <subcellularLocation>
        <location evidence="2">Endoplasmic reticulum membrane</location>
        <topology evidence="2">Single-pass membrane protein</topology>
        <orientation evidence="2">Cytoplasmic side</orientation>
    </subcellularLocation>
</comment>
<comment type="biotechnology">
    <text evidence="5 6">Artemisinin and derivatives (e.g. artesunate), are antimalarial drugs due to their endoperoxidase properties; they also display multiple pharmacological actions against inflammation,viral infections, and cell and tumor proliferation (PubMed:32405226, PubMed:32514287). Artesunate may be a promising treatment for COVID-19 mediated by the severe acute respiratory syndrome coronavirus 2 (2019-nCoV) (SARS-CoV-2) because of its anti-inflammatory activity, NF-kappaB (nuclear factor kappa B)-coronavirus effect and chloroquine-like endocytosis inhibition mechanism (PubMed:32405226, PubMed:32514287).</text>
</comment>
<comment type="similarity">
    <text evidence="2">Belongs to the NADPH--cytochrome P450 reductase family.</text>
</comment>
<comment type="similarity">
    <text evidence="2">In the N-terminal section; belongs to the flavodoxin family.</text>
</comment>
<comment type="similarity">
    <text evidence="2">In the C-terminal section; belongs to the flavoprotein pyridine nucleotide cytochrome reductase family.</text>
</comment>
<feature type="chain" id="PRO_0000451733" description="NADPH--cytochrome P450 reductase 2">
    <location>
        <begin position="1"/>
        <end position="709"/>
    </location>
</feature>
<feature type="transmembrane region" description="Helical" evidence="2">
    <location>
        <begin position="47"/>
        <end position="67"/>
    </location>
</feature>
<feature type="domain" description="Flavodoxin-like" evidence="2">
    <location>
        <begin position="104"/>
        <end position="254"/>
    </location>
</feature>
<feature type="domain" description="FAD-binding FR-type" evidence="2">
    <location>
        <begin position="307"/>
        <end position="554"/>
    </location>
</feature>
<feature type="region of interest" description="Disordered" evidence="4">
    <location>
        <begin position="288"/>
        <end position="308"/>
    </location>
</feature>
<feature type="compositionally biased region" description="Basic and acidic residues" evidence="4">
    <location>
        <begin position="288"/>
        <end position="297"/>
    </location>
</feature>
<feature type="binding site" evidence="2">
    <location>
        <begin position="110"/>
        <end position="115"/>
    </location>
    <ligand>
        <name>FMN</name>
        <dbReference type="ChEBI" id="CHEBI:58210"/>
    </ligand>
</feature>
<feature type="binding site" evidence="2">
    <location>
        <begin position="165"/>
        <end position="168"/>
    </location>
    <ligand>
        <name>FMN</name>
        <dbReference type="ChEBI" id="CHEBI:58210"/>
    </ligand>
</feature>
<feature type="binding site" evidence="2">
    <location>
        <begin position="203"/>
        <end position="212"/>
    </location>
    <ligand>
        <name>FMN</name>
        <dbReference type="ChEBI" id="CHEBI:58210"/>
    </ligand>
</feature>
<feature type="binding site" evidence="2">
    <location>
        <position position="238"/>
    </location>
    <ligand>
        <name>FMN</name>
        <dbReference type="ChEBI" id="CHEBI:58210"/>
    </ligand>
</feature>
<feature type="binding site" evidence="2">
    <location>
        <position position="327"/>
    </location>
    <ligand>
        <name>NADP(+)</name>
        <dbReference type="ChEBI" id="CHEBI:58349"/>
    </ligand>
</feature>
<feature type="binding site" evidence="2">
    <location>
        <begin position="487"/>
        <end position="490"/>
    </location>
    <ligand>
        <name>FAD</name>
        <dbReference type="ChEBI" id="CHEBI:57692"/>
    </ligand>
</feature>
<feature type="binding site" evidence="2">
    <location>
        <begin position="505"/>
        <end position="507"/>
    </location>
    <ligand>
        <name>FAD</name>
        <dbReference type="ChEBI" id="CHEBI:57692"/>
    </ligand>
</feature>
<feature type="binding site" evidence="2">
    <location>
        <begin position="521"/>
        <end position="524"/>
    </location>
    <ligand>
        <name>FAD</name>
        <dbReference type="ChEBI" id="CHEBI:57692"/>
    </ligand>
</feature>
<feature type="binding site" evidence="2">
    <location>
        <position position="568"/>
    </location>
    <ligand>
        <name>NADP(+)</name>
        <dbReference type="ChEBI" id="CHEBI:58349"/>
    </ligand>
</feature>
<feature type="binding site" evidence="2">
    <location>
        <begin position="629"/>
        <end position="630"/>
    </location>
    <ligand>
        <name>NADP(+)</name>
        <dbReference type="ChEBI" id="CHEBI:58349"/>
    </ligand>
</feature>
<feature type="binding site" evidence="2">
    <location>
        <begin position="635"/>
        <end position="639"/>
    </location>
    <ligand>
        <name>NADP(+)</name>
        <dbReference type="ChEBI" id="CHEBI:58349"/>
    </ligand>
</feature>
<feature type="binding site" evidence="2">
    <location>
        <position position="671"/>
    </location>
    <ligand>
        <name>NADP(+)</name>
        <dbReference type="ChEBI" id="CHEBI:58349"/>
    </ligand>
</feature>
<feature type="binding site" evidence="2">
    <location>
        <position position="709"/>
    </location>
    <ligand>
        <name>FAD</name>
        <dbReference type="ChEBI" id="CHEBI:57692"/>
    </ligand>
</feature>
<feature type="glycosylation site" description="N-linked (GlcNAc...) asparagine" evidence="3">
    <location>
        <position position="27"/>
    </location>
</feature>
<gene>
    <name evidence="7" type="primary">CPR2</name>
    <name evidence="8" type="ORF">CTI12_AA499850</name>
</gene>
<organism>
    <name type="scientific">Artemisia annua</name>
    <name type="common">Sweet wormwood</name>
    <dbReference type="NCBI Taxonomy" id="35608"/>
    <lineage>
        <taxon>Eukaryota</taxon>
        <taxon>Viridiplantae</taxon>
        <taxon>Streptophyta</taxon>
        <taxon>Embryophyta</taxon>
        <taxon>Tracheophyta</taxon>
        <taxon>Spermatophyta</taxon>
        <taxon>Magnoliopsida</taxon>
        <taxon>eudicotyledons</taxon>
        <taxon>Gunneridae</taxon>
        <taxon>Pentapetalae</taxon>
        <taxon>asterids</taxon>
        <taxon>campanulids</taxon>
        <taxon>Asterales</taxon>
        <taxon>Asteraceae</taxon>
        <taxon>Asteroideae</taxon>
        <taxon>Anthemideae</taxon>
        <taxon>Artemisiinae</taxon>
        <taxon>Artemisia</taxon>
    </lineage>
</organism>
<name>NCPR2_ARTAN</name>
<sequence>MQTDSVQVSPFDLASSLLNVKLTDVLNMSEELTMSPAMKMLVENRDILTLFTTTVAVLIGCVVVLVWRRSFTKKSVTNEVETMKIVVPKKEIKHEEVDDGKKRVTILYGTQTGTAEGFAKAFLEEAKVRYEKALFKAIDLDDYAADDEEYEEKFKKESLAFFFLATYGDGEPTDNAARFYKWFTEGDDKGEWLKKLQYGVFGLGNRQYEHFNKIAVVVDDKLAEQGAKRLVSVGLGDDDQCMEDDFTAWKELVWPQLDQLLRDEDDMSVATPYTAAVLEYRVVYHDKPDSSAEDHSHTNGHAVPDAQHPIRSNVAFKKELHTPESDRSCTHLEFDIANTGLSYETGDHVGVYCENLSEVVDEAVRLVGLPADTYFSVHADNEDGTPIGGASLPPPFPPCTLRDALARYADVLSSPKKSALLGLAAHASDPAEAERLKFLASPAGKDEYAQWIVASQRSLLEVMEAFPSAKPPLGVFFAAISPRLQPRYYSISSSPKMVENKIHVTCALVYEKTPVGRIHKGVCSTWMKDAVPMTESQVYSWAPIFVRTSNFRLPSDPKVPVIMIGPGTGLAPFRGFLQERLSLKEAGTELGSSVLFFGCRNRKVDFIYEDELNNFVKTGALSELVVAFSREGPTKEYVQHKLTQKASDIWNLLTEGAYLYVCGDAKGMAKDVHRTLHTIVQEQGSLDSSKAELYVKNLQMSGRYLRDVW</sequence>
<accession>A0A2U1KZS6</accession>
<reference key="1">
    <citation type="journal article" date="2018" name="Mol. Plant">
        <title>The genome of Artemisia annua provides insight into the evolution of Asteraceae family and artemisinin biosynthesis.</title>
        <authorList>
            <person name="Shen Q."/>
            <person name="Zhang L."/>
            <person name="Liao Z."/>
            <person name="Wang S."/>
            <person name="Yan T."/>
            <person name="Shi P."/>
            <person name="Liu M."/>
            <person name="Fu X."/>
            <person name="Pan Q."/>
            <person name="Wang Y."/>
            <person name="Lv Z."/>
            <person name="Lu X."/>
            <person name="Zhang F."/>
            <person name="Jiang W."/>
            <person name="Ma Y."/>
            <person name="Chen M."/>
            <person name="Hao X."/>
            <person name="Li L."/>
            <person name="Tang Y."/>
            <person name="Lv G."/>
            <person name="Zhou Y."/>
            <person name="Sun X."/>
            <person name="Brodelius P.E."/>
            <person name="Rose J.K.C."/>
            <person name="Tang K."/>
        </authorList>
    </citation>
    <scope>NUCLEOTIDE SEQUENCE [LARGE SCALE GENOMIC DNA]</scope>
    <source>
        <strain>cv. Huhao1</strain>
        <tissue>Leaf</tissue>
    </source>
</reference>
<reference key="2">
    <citation type="journal article" date="2020" name="Chin. Med. J.">
        <title>Artesunate: could be an alternative drug to chloroquine in COVID-19 treatment?</title>
        <authorList>
            <person name="Uzun T."/>
            <person name="Toptas O."/>
        </authorList>
    </citation>
    <scope>BIOTECHNOLOGY</scope>
</reference>
<reference key="3">
    <citation type="journal article" date="2020" name="Pharmacol. Res.">
        <title>Anti-malarial drug, artemisinin and its derivatives for the treatment of respiratory diseases.</title>
        <authorList>
            <person name="Cheong D.H.J."/>
            <person name="Tan D.W.S."/>
            <person name="Wong F.W.S."/>
            <person name="Tran T."/>
        </authorList>
    </citation>
    <scope>BIOTECHNOLOGY</scope>
    <scope>REVIEW</scope>
</reference>
<protein>
    <recommendedName>
        <fullName evidence="2">NADPH--cytochrome P450 reductase 2</fullName>
        <shortName evidence="2">CPR 2</shortName>
        <shortName evidence="2">P450R 2</shortName>
        <ecNumber evidence="2">1.6.2.4</ecNumber>
    </recommendedName>
</protein>
<keyword id="KW-0256">Endoplasmic reticulum</keyword>
<keyword id="KW-0274">FAD</keyword>
<keyword id="KW-0285">Flavoprotein</keyword>
<keyword id="KW-0288">FMN</keyword>
<keyword id="KW-0325">Glycoprotein</keyword>
<keyword id="KW-0472">Membrane</keyword>
<keyword id="KW-0521">NADP</keyword>
<keyword id="KW-0560">Oxidoreductase</keyword>
<keyword id="KW-1185">Reference proteome</keyword>
<keyword id="KW-0812">Transmembrane</keyword>
<keyword id="KW-1133">Transmembrane helix</keyword>
<dbReference type="EC" id="1.6.2.4" evidence="2"/>
<dbReference type="EMBL" id="PKPP01012532">
    <property type="protein sequence ID" value="PWA42239.1"/>
    <property type="molecule type" value="Genomic_DNA"/>
</dbReference>
<dbReference type="SMR" id="A0A2U1KZS6"/>
<dbReference type="STRING" id="35608.A0A2U1KZS6"/>
<dbReference type="GlyCosmos" id="A0A2U1KZS6">
    <property type="glycosylation" value="1 site, No reported glycans"/>
</dbReference>
<dbReference type="OrthoDB" id="1856718at2759"/>
<dbReference type="Proteomes" id="UP000245207">
    <property type="component" value="Unassembled WGS sequence"/>
</dbReference>
<dbReference type="GO" id="GO:0005829">
    <property type="term" value="C:cytosol"/>
    <property type="evidence" value="ECO:0007669"/>
    <property type="project" value="TreeGrafter"/>
</dbReference>
<dbReference type="GO" id="GO:0005789">
    <property type="term" value="C:endoplasmic reticulum membrane"/>
    <property type="evidence" value="ECO:0007669"/>
    <property type="project" value="UniProtKB-SubCell"/>
</dbReference>
<dbReference type="GO" id="GO:0050660">
    <property type="term" value="F:flavin adenine dinucleotide binding"/>
    <property type="evidence" value="ECO:0007669"/>
    <property type="project" value="UniProtKB-UniRule"/>
</dbReference>
<dbReference type="GO" id="GO:0010181">
    <property type="term" value="F:FMN binding"/>
    <property type="evidence" value="ECO:0007669"/>
    <property type="project" value="UniProtKB-UniRule"/>
</dbReference>
<dbReference type="GO" id="GO:0050661">
    <property type="term" value="F:NADP binding"/>
    <property type="evidence" value="ECO:0007669"/>
    <property type="project" value="UniProtKB-UniRule"/>
</dbReference>
<dbReference type="GO" id="GO:0003958">
    <property type="term" value="F:NADPH-hemoprotein reductase activity"/>
    <property type="evidence" value="ECO:0000250"/>
    <property type="project" value="UniProtKB"/>
</dbReference>
<dbReference type="GO" id="GO:0016491">
    <property type="term" value="F:oxidoreductase activity"/>
    <property type="evidence" value="ECO:0000250"/>
    <property type="project" value="UniProtKB"/>
</dbReference>
<dbReference type="GO" id="GO:0051762">
    <property type="term" value="P:sesquiterpene biosynthetic process"/>
    <property type="evidence" value="ECO:0000250"/>
    <property type="project" value="UniProtKB"/>
</dbReference>
<dbReference type="CDD" id="cd06204">
    <property type="entry name" value="CYPOR"/>
    <property type="match status" value="1"/>
</dbReference>
<dbReference type="FunFam" id="1.20.990.10:FF:000003">
    <property type="entry name" value="NADPH--cytochrome P450 reductase"/>
    <property type="match status" value="1"/>
</dbReference>
<dbReference type="FunFam" id="3.40.50.360:FF:000023">
    <property type="entry name" value="NADPH--cytochrome P450 reductase"/>
    <property type="match status" value="1"/>
</dbReference>
<dbReference type="FunFam" id="3.40.50.80:FF:000001">
    <property type="entry name" value="NADPH--cytochrome P450 reductase 1"/>
    <property type="match status" value="1"/>
</dbReference>
<dbReference type="Gene3D" id="3.40.50.360">
    <property type="match status" value="1"/>
</dbReference>
<dbReference type="Gene3D" id="1.20.990.10">
    <property type="entry name" value="NADPH-cytochrome p450 Reductase, Chain A, domain 3"/>
    <property type="match status" value="1"/>
</dbReference>
<dbReference type="Gene3D" id="3.40.50.80">
    <property type="entry name" value="Nucleotide-binding domain of ferredoxin-NADP reductase (FNR) module"/>
    <property type="match status" value="1"/>
</dbReference>
<dbReference type="Gene3D" id="2.40.30.10">
    <property type="entry name" value="Translation factors"/>
    <property type="match status" value="1"/>
</dbReference>
<dbReference type="HAMAP" id="MF_03212">
    <property type="entry name" value="NCPR"/>
    <property type="match status" value="1"/>
</dbReference>
<dbReference type="InterPro" id="IPR003097">
    <property type="entry name" value="CysJ-like_FAD-binding"/>
</dbReference>
<dbReference type="InterPro" id="IPR017927">
    <property type="entry name" value="FAD-bd_FR_type"/>
</dbReference>
<dbReference type="InterPro" id="IPR001094">
    <property type="entry name" value="Flavdoxin-like"/>
</dbReference>
<dbReference type="InterPro" id="IPR008254">
    <property type="entry name" value="Flavodoxin/NO_synth"/>
</dbReference>
<dbReference type="InterPro" id="IPR001709">
    <property type="entry name" value="Flavoprot_Pyr_Nucl_cyt_Rdtase"/>
</dbReference>
<dbReference type="InterPro" id="IPR029039">
    <property type="entry name" value="Flavoprotein-like_sf"/>
</dbReference>
<dbReference type="InterPro" id="IPR039261">
    <property type="entry name" value="FNR_nucleotide-bd"/>
</dbReference>
<dbReference type="InterPro" id="IPR023173">
    <property type="entry name" value="NADPH_Cyt_P450_Rdtase_alpha"/>
</dbReference>
<dbReference type="InterPro" id="IPR001433">
    <property type="entry name" value="OxRdtase_FAD/NAD-bd"/>
</dbReference>
<dbReference type="InterPro" id="IPR023208">
    <property type="entry name" value="P450R"/>
</dbReference>
<dbReference type="InterPro" id="IPR017938">
    <property type="entry name" value="Riboflavin_synthase-like_b-brl"/>
</dbReference>
<dbReference type="PANTHER" id="PTHR19384:SF17">
    <property type="entry name" value="NADPH--CYTOCHROME P450 REDUCTASE"/>
    <property type="match status" value="1"/>
</dbReference>
<dbReference type="PANTHER" id="PTHR19384">
    <property type="entry name" value="NITRIC OXIDE SYNTHASE-RELATED"/>
    <property type="match status" value="1"/>
</dbReference>
<dbReference type="Pfam" id="PF00667">
    <property type="entry name" value="FAD_binding_1"/>
    <property type="match status" value="1"/>
</dbReference>
<dbReference type="Pfam" id="PF00258">
    <property type="entry name" value="Flavodoxin_1"/>
    <property type="match status" value="1"/>
</dbReference>
<dbReference type="Pfam" id="PF00175">
    <property type="entry name" value="NAD_binding_1"/>
    <property type="match status" value="1"/>
</dbReference>
<dbReference type="PIRSF" id="PIRSF000208">
    <property type="entry name" value="P450R"/>
    <property type="match status" value="1"/>
</dbReference>
<dbReference type="PRINTS" id="PR00369">
    <property type="entry name" value="FLAVODOXIN"/>
</dbReference>
<dbReference type="PRINTS" id="PR00371">
    <property type="entry name" value="FPNCR"/>
</dbReference>
<dbReference type="SUPFAM" id="SSF52343">
    <property type="entry name" value="Ferredoxin reductase-like, C-terminal NADP-linked domain"/>
    <property type="match status" value="1"/>
</dbReference>
<dbReference type="SUPFAM" id="SSF52218">
    <property type="entry name" value="Flavoproteins"/>
    <property type="match status" value="1"/>
</dbReference>
<dbReference type="SUPFAM" id="SSF63380">
    <property type="entry name" value="Riboflavin synthase domain-like"/>
    <property type="match status" value="1"/>
</dbReference>
<dbReference type="PROSITE" id="PS51384">
    <property type="entry name" value="FAD_FR"/>
    <property type="match status" value="1"/>
</dbReference>
<dbReference type="PROSITE" id="PS50902">
    <property type="entry name" value="FLAVODOXIN_LIKE"/>
    <property type="match status" value="1"/>
</dbReference>
<evidence type="ECO:0000250" key="1">
    <source>
        <dbReference type="UniProtKB" id="A0A2U1LIM9"/>
    </source>
</evidence>
<evidence type="ECO:0000255" key="2">
    <source>
        <dbReference type="HAMAP-Rule" id="MF_03212"/>
    </source>
</evidence>
<evidence type="ECO:0000255" key="3">
    <source>
        <dbReference type="PROSITE-ProRule" id="PRU00498"/>
    </source>
</evidence>
<evidence type="ECO:0000256" key="4">
    <source>
        <dbReference type="SAM" id="MobiDB-lite"/>
    </source>
</evidence>
<evidence type="ECO:0000303" key="5">
    <source>
    </source>
</evidence>
<evidence type="ECO:0000303" key="6">
    <source>
    </source>
</evidence>
<evidence type="ECO:0000305" key="7"/>
<evidence type="ECO:0000312" key="8">
    <source>
        <dbReference type="EMBL" id="PWA42239.1"/>
    </source>
</evidence>